<protein>
    <recommendedName>
        <fullName evidence="6">piRNA biogenesis protein EXD1</fullName>
    </recommendedName>
    <alternativeName>
        <fullName evidence="8">Exonuclease 3'-5' domain-containing protein 1</fullName>
    </alternativeName>
    <alternativeName>
        <fullName evidence="8">Exonuclease 3'-5' domain-like-containing protein 1</fullName>
    </alternativeName>
    <alternativeName>
        <fullName evidence="6">Inactive exonuclease EXD1</fullName>
        <shortName evidence="5">mExd1</shortName>
    </alternativeName>
</protein>
<accession>Q8CDF7</accession>
<evidence type="ECO:0000250" key="1">
    <source>
        <dbReference type="UniProtKB" id="H9IUR0"/>
    </source>
</evidence>
<evidence type="ECO:0000255" key="2"/>
<evidence type="ECO:0000256" key="3">
    <source>
        <dbReference type="SAM" id="MobiDB-lite"/>
    </source>
</evidence>
<evidence type="ECO:0000269" key="4">
    <source>
    </source>
</evidence>
<evidence type="ECO:0000303" key="5">
    <source>
    </source>
</evidence>
<evidence type="ECO:0000305" key="6"/>
<evidence type="ECO:0000305" key="7">
    <source>
    </source>
</evidence>
<evidence type="ECO:0000312" key="8">
    <source>
        <dbReference type="MGI" id="MGI:3045306"/>
    </source>
</evidence>
<organism>
    <name type="scientific">Mus musculus</name>
    <name type="common">Mouse</name>
    <dbReference type="NCBI Taxonomy" id="10090"/>
    <lineage>
        <taxon>Eukaryota</taxon>
        <taxon>Metazoa</taxon>
        <taxon>Chordata</taxon>
        <taxon>Craniata</taxon>
        <taxon>Vertebrata</taxon>
        <taxon>Euteleostomi</taxon>
        <taxon>Mammalia</taxon>
        <taxon>Eutheria</taxon>
        <taxon>Euarchontoglires</taxon>
        <taxon>Glires</taxon>
        <taxon>Rodentia</taxon>
        <taxon>Myomorpha</taxon>
        <taxon>Muroidea</taxon>
        <taxon>Muridae</taxon>
        <taxon>Murinae</taxon>
        <taxon>Mus</taxon>
        <taxon>Mus</taxon>
    </lineage>
</organism>
<keyword id="KW-0963">Cytoplasm</keyword>
<keyword id="KW-0469">Meiosis</keyword>
<keyword id="KW-1185">Reference proteome</keyword>
<keyword id="KW-0694">RNA-binding</keyword>
<keyword id="KW-0943">RNA-mediated gene silencing</keyword>
<reference key="1">
    <citation type="journal article" date="2005" name="Science">
        <title>The transcriptional landscape of the mammalian genome.</title>
        <authorList>
            <person name="Carninci P."/>
            <person name="Kasukawa T."/>
            <person name="Katayama S."/>
            <person name="Gough J."/>
            <person name="Frith M.C."/>
            <person name="Maeda N."/>
            <person name="Oyama R."/>
            <person name="Ravasi T."/>
            <person name="Lenhard B."/>
            <person name="Wells C."/>
            <person name="Kodzius R."/>
            <person name="Shimokawa K."/>
            <person name="Bajic V.B."/>
            <person name="Brenner S.E."/>
            <person name="Batalov S."/>
            <person name="Forrest A.R."/>
            <person name="Zavolan M."/>
            <person name="Davis M.J."/>
            <person name="Wilming L.G."/>
            <person name="Aidinis V."/>
            <person name="Allen J.E."/>
            <person name="Ambesi-Impiombato A."/>
            <person name="Apweiler R."/>
            <person name="Aturaliya R.N."/>
            <person name="Bailey T.L."/>
            <person name="Bansal M."/>
            <person name="Baxter L."/>
            <person name="Beisel K.W."/>
            <person name="Bersano T."/>
            <person name="Bono H."/>
            <person name="Chalk A.M."/>
            <person name="Chiu K.P."/>
            <person name="Choudhary V."/>
            <person name="Christoffels A."/>
            <person name="Clutterbuck D.R."/>
            <person name="Crowe M.L."/>
            <person name="Dalla E."/>
            <person name="Dalrymple B.P."/>
            <person name="de Bono B."/>
            <person name="Della Gatta G."/>
            <person name="di Bernardo D."/>
            <person name="Down T."/>
            <person name="Engstrom P."/>
            <person name="Fagiolini M."/>
            <person name="Faulkner G."/>
            <person name="Fletcher C.F."/>
            <person name="Fukushima T."/>
            <person name="Furuno M."/>
            <person name="Futaki S."/>
            <person name="Gariboldi M."/>
            <person name="Georgii-Hemming P."/>
            <person name="Gingeras T.R."/>
            <person name="Gojobori T."/>
            <person name="Green R.E."/>
            <person name="Gustincich S."/>
            <person name="Harbers M."/>
            <person name="Hayashi Y."/>
            <person name="Hensch T.K."/>
            <person name="Hirokawa N."/>
            <person name="Hill D."/>
            <person name="Huminiecki L."/>
            <person name="Iacono M."/>
            <person name="Ikeo K."/>
            <person name="Iwama A."/>
            <person name="Ishikawa T."/>
            <person name="Jakt M."/>
            <person name="Kanapin A."/>
            <person name="Katoh M."/>
            <person name="Kawasawa Y."/>
            <person name="Kelso J."/>
            <person name="Kitamura H."/>
            <person name="Kitano H."/>
            <person name="Kollias G."/>
            <person name="Krishnan S.P."/>
            <person name="Kruger A."/>
            <person name="Kummerfeld S.K."/>
            <person name="Kurochkin I.V."/>
            <person name="Lareau L.F."/>
            <person name="Lazarevic D."/>
            <person name="Lipovich L."/>
            <person name="Liu J."/>
            <person name="Liuni S."/>
            <person name="McWilliam S."/>
            <person name="Madan Babu M."/>
            <person name="Madera M."/>
            <person name="Marchionni L."/>
            <person name="Matsuda H."/>
            <person name="Matsuzawa S."/>
            <person name="Miki H."/>
            <person name="Mignone F."/>
            <person name="Miyake S."/>
            <person name="Morris K."/>
            <person name="Mottagui-Tabar S."/>
            <person name="Mulder N."/>
            <person name="Nakano N."/>
            <person name="Nakauchi H."/>
            <person name="Ng P."/>
            <person name="Nilsson R."/>
            <person name="Nishiguchi S."/>
            <person name="Nishikawa S."/>
            <person name="Nori F."/>
            <person name="Ohara O."/>
            <person name="Okazaki Y."/>
            <person name="Orlando V."/>
            <person name="Pang K.C."/>
            <person name="Pavan W.J."/>
            <person name="Pavesi G."/>
            <person name="Pesole G."/>
            <person name="Petrovsky N."/>
            <person name="Piazza S."/>
            <person name="Reed J."/>
            <person name="Reid J.F."/>
            <person name="Ring B.Z."/>
            <person name="Ringwald M."/>
            <person name="Rost B."/>
            <person name="Ruan Y."/>
            <person name="Salzberg S.L."/>
            <person name="Sandelin A."/>
            <person name="Schneider C."/>
            <person name="Schoenbach C."/>
            <person name="Sekiguchi K."/>
            <person name="Semple C.A."/>
            <person name="Seno S."/>
            <person name="Sessa L."/>
            <person name="Sheng Y."/>
            <person name="Shibata Y."/>
            <person name="Shimada H."/>
            <person name="Shimada K."/>
            <person name="Silva D."/>
            <person name="Sinclair B."/>
            <person name="Sperling S."/>
            <person name="Stupka E."/>
            <person name="Sugiura K."/>
            <person name="Sultana R."/>
            <person name="Takenaka Y."/>
            <person name="Taki K."/>
            <person name="Tammoja K."/>
            <person name="Tan S.L."/>
            <person name="Tang S."/>
            <person name="Taylor M.S."/>
            <person name="Tegner J."/>
            <person name="Teichmann S.A."/>
            <person name="Ueda H.R."/>
            <person name="van Nimwegen E."/>
            <person name="Verardo R."/>
            <person name="Wei C.L."/>
            <person name="Yagi K."/>
            <person name="Yamanishi H."/>
            <person name="Zabarovsky E."/>
            <person name="Zhu S."/>
            <person name="Zimmer A."/>
            <person name="Hide W."/>
            <person name="Bult C."/>
            <person name="Grimmond S.M."/>
            <person name="Teasdale R.D."/>
            <person name="Liu E.T."/>
            <person name="Brusic V."/>
            <person name="Quackenbush J."/>
            <person name="Wahlestedt C."/>
            <person name="Mattick J.S."/>
            <person name="Hume D.A."/>
            <person name="Kai C."/>
            <person name="Sasaki D."/>
            <person name="Tomaru Y."/>
            <person name="Fukuda S."/>
            <person name="Kanamori-Katayama M."/>
            <person name="Suzuki M."/>
            <person name="Aoki J."/>
            <person name="Arakawa T."/>
            <person name="Iida J."/>
            <person name="Imamura K."/>
            <person name="Itoh M."/>
            <person name="Kato T."/>
            <person name="Kawaji H."/>
            <person name="Kawagashira N."/>
            <person name="Kawashima T."/>
            <person name="Kojima M."/>
            <person name="Kondo S."/>
            <person name="Konno H."/>
            <person name="Nakano K."/>
            <person name="Ninomiya N."/>
            <person name="Nishio T."/>
            <person name="Okada M."/>
            <person name="Plessy C."/>
            <person name="Shibata K."/>
            <person name="Shiraki T."/>
            <person name="Suzuki S."/>
            <person name="Tagami M."/>
            <person name="Waki K."/>
            <person name="Watahiki A."/>
            <person name="Okamura-Oho Y."/>
            <person name="Suzuki H."/>
            <person name="Kawai J."/>
            <person name="Hayashizaki Y."/>
        </authorList>
    </citation>
    <scope>NUCLEOTIDE SEQUENCE [LARGE SCALE MRNA]</scope>
    <source>
        <strain>C57BL/6J</strain>
        <tissue>Testis</tissue>
    </source>
</reference>
<reference key="2">
    <citation type="journal article" date="2009" name="PLoS Biol.">
        <title>Lineage-specific biology revealed by a finished genome assembly of the mouse.</title>
        <authorList>
            <person name="Church D.M."/>
            <person name="Goodstadt L."/>
            <person name="Hillier L.W."/>
            <person name="Zody M.C."/>
            <person name="Goldstein S."/>
            <person name="She X."/>
            <person name="Bult C.J."/>
            <person name="Agarwala R."/>
            <person name="Cherry J.L."/>
            <person name="DiCuccio M."/>
            <person name="Hlavina W."/>
            <person name="Kapustin Y."/>
            <person name="Meric P."/>
            <person name="Maglott D."/>
            <person name="Birtle Z."/>
            <person name="Marques A.C."/>
            <person name="Graves T."/>
            <person name="Zhou S."/>
            <person name="Teague B."/>
            <person name="Potamousis K."/>
            <person name="Churas C."/>
            <person name="Place M."/>
            <person name="Herschleb J."/>
            <person name="Runnheim R."/>
            <person name="Forrest D."/>
            <person name="Amos-Landgraf J."/>
            <person name="Schwartz D.C."/>
            <person name="Cheng Z."/>
            <person name="Lindblad-Toh K."/>
            <person name="Eichler E.E."/>
            <person name="Ponting C.P."/>
        </authorList>
    </citation>
    <scope>NUCLEOTIDE SEQUENCE [LARGE SCALE GENOMIC DNA]</scope>
    <source>
        <strain>C57BL/6J</strain>
    </source>
</reference>
<reference key="3">
    <citation type="journal article" date="2004" name="Genome Res.">
        <title>The status, quality, and expansion of the NIH full-length cDNA project: the Mammalian Gene Collection (MGC).</title>
        <authorList>
            <consortium name="The MGC Project Team"/>
        </authorList>
    </citation>
    <scope>NUCLEOTIDE SEQUENCE [LARGE SCALE MRNA]</scope>
    <source>
        <strain>C57BL/6J</strain>
        <tissue>Head</tissue>
    </source>
</reference>
<reference key="4">
    <citation type="journal article" date="2016" name="Mol. Cell">
        <title>PIWI slicing and EXD1 drive biogenesis of nuclear piRNAs from cytosolic targets of the mouse piRNA pathway.</title>
        <authorList>
            <person name="Yang Z."/>
            <person name="Chen K.M."/>
            <person name="Pandey R.R."/>
            <person name="Homolka D."/>
            <person name="Reuter M."/>
            <person name="Janeiro B.K."/>
            <person name="Sachidanandam R."/>
            <person name="Fauvarque M.O."/>
            <person name="McCarthy A.A."/>
            <person name="Pillai R.S."/>
        </authorList>
    </citation>
    <scope>FUNCTION</scope>
    <scope>IDENTIFICATION IN THE PET COMPLEX</scope>
    <scope>DOMAIN</scope>
    <scope>DISRUPTION PHENOTYPE</scope>
</reference>
<feature type="chain" id="PRO_0000337245" description="piRNA biogenesis protein EXD1">
    <location>
        <begin position="1"/>
        <end position="570"/>
    </location>
</feature>
<feature type="domain" description="3'-5' exonuclease" evidence="2">
    <location>
        <begin position="135"/>
        <end position="307"/>
    </location>
</feature>
<feature type="region of interest" description="Disordered" evidence="3">
    <location>
        <begin position="433"/>
        <end position="485"/>
    </location>
</feature>
<feature type="compositionally biased region" description="Basic and acidic residues" evidence="3">
    <location>
        <begin position="433"/>
        <end position="442"/>
    </location>
</feature>
<feature type="compositionally biased region" description="Basic and acidic residues" evidence="3">
    <location>
        <begin position="453"/>
        <end position="465"/>
    </location>
</feature>
<proteinExistence type="evidence at protein level"/>
<name>EXD1_MOUSE</name>
<gene>
    <name type="primary">Exd1</name>
    <name type="synonym">Exdl1</name>
</gene>
<dbReference type="EMBL" id="AK030132">
    <property type="protein sequence ID" value="BAC26799.1"/>
    <property type="molecule type" value="mRNA"/>
</dbReference>
<dbReference type="EMBL" id="AL844536">
    <property type="status" value="NOT_ANNOTATED_CDS"/>
    <property type="molecule type" value="Genomic_DNA"/>
</dbReference>
<dbReference type="EMBL" id="AL844862">
    <property type="status" value="NOT_ANNOTATED_CDS"/>
    <property type="molecule type" value="Genomic_DNA"/>
</dbReference>
<dbReference type="EMBL" id="BC092241">
    <property type="protein sequence ID" value="AAH92241.1"/>
    <property type="molecule type" value="mRNA"/>
</dbReference>
<dbReference type="CCDS" id="CCDS16603.1"/>
<dbReference type="RefSeq" id="NP_001394746.1">
    <property type="nucleotide sequence ID" value="NM_001407817.1"/>
</dbReference>
<dbReference type="RefSeq" id="NP_766445.1">
    <property type="nucleotide sequence ID" value="NM_172857.3"/>
</dbReference>
<dbReference type="RefSeq" id="XP_006499554.1">
    <property type="nucleotide sequence ID" value="XM_006499491.2"/>
</dbReference>
<dbReference type="RefSeq" id="XP_017173654.1">
    <property type="nucleotide sequence ID" value="XM_017318165.1"/>
</dbReference>
<dbReference type="SMR" id="Q8CDF7"/>
<dbReference type="CORUM" id="Q8CDF7"/>
<dbReference type="FunCoup" id="Q8CDF7">
    <property type="interactions" value="5"/>
</dbReference>
<dbReference type="STRING" id="10090.ENSMUSP00000054980"/>
<dbReference type="iPTMnet" id="Q8CDF7"/>
<dbReference type="PhosphoSitePlus" id="Q8CDF7"/>
<dbReference type="PaxDb" id="10090-ENSMUSP00000054980"/>
<dbReference type="ProteomicsDB" id="267669"/>
<dbReference type="Antibodypedia" id="23259">
    <property type="antibodies" value="163 antibodies from 15 providers"/>
</dbReference>
<dbReference type="DNASU" id="241624"/>
<dbReference type="Ensembl" id="ENSMUST00000060009.9">
    <property type="protein sequence ID" value="ENSMUSP00000054980.3"/>
    <property type="gene ID" value="ENSMUSG00000048647.10"/>
</dbReference>
<dbReference type="Ensembl" id="ENSMUST00000171024.8">
    <property type="protein sequence ID" value="ENSMUSP00000126713.2"/>
    <property type="gene ID" value="ENSMUSG00000048647.10"/>
</dbReference>
<dbReference type="GeneID" id="241624"/>
<dbReference type="KEGG" id="mmu:241624"/>
<dbReference type="UCSC" id="uc008ltu.1">
    <property type="organism name" value="mouse"/>
</dbReference>
<dbReference type="AGR" id="MGI:3045306"/>
<dbReference type="CTD" id="161829"/>
<dbReference type="MGI" id="MGI:3045306">
    <property type="gene designation" value="Exd1"/>
</dbReference>
<dbReference type="VEuPathDB" id="HostDB:ENSMUSG00000048647"/>
<dbReference type="eggNOG" id="KOG2405">
    <property type="taxonomic scope" value="Eukaryota"/>
</dbReference>
<dbReference type="GeneTree" id="ENSGT00390000003581"/>
<dbReference type="HOGENOM" id="CLU_034376_1_0_1"/>
<dbReference type="InParanoid" id="Q8CDF7"/>
<dbReference type="OMA" id="GMEPTCM"/>
<dbReference type="OrthoDB" id="26838at2759"/>
<dbReference type="PhylomeDB" id="Q8CDF7"/>
<dbReference type="TreeFam" id="TF315023"/>
<dbReference type="BioGRID-ORCS" id="241624">
    <property type="hits" value="3 hits in 76 CRISPR screens"/>
</dbReference>
<dbReference type="PRO" id="PR:Q8CDF7"/>
<dbReference type="Proteomes" id="UP000000589">
    <property type="component" value="Chromosome 2"/>
</dbReference>
<dbReference type="RNAct" id="Q8CDF7">
    <property type="molecule type" value="protein"/>
</dbReference>
<dbReference type="Bgee" id="ENSMUSG00000048647">
    <property type="expression patterns" value="Expressed in cleaving embryo and 111 other cell types or tissues"/>
</dbReference>
<dbReference type="ExpressionAtlas" id="Q8CDF7">
    <property type="expression patterns" value="baseline and differential"/>
</dbReference>
<dbReference type="GO" id="GO:0043186">
    <property type="term" value="C:P granule"/>
    <property type="evidence" value="ECO:0000250"/>
    <property type="project" value="UniProtKB"/>
</dbReference>
<dbReference type="GO" id="GO:1990923">
    <property type="term" value="C:PET complex"/>
    <property type="evidence" value="ECO:0000314"/>
    <property type="project" value="UniProtKB"/>
</dbReference>
<dbReference type="GO" id="GO:0042803">
    <property type="term" value="F:protein homodimerization activity"/>
    <property type="evidence" value="ECO:0000250"/>
    <property type="project" value="UniProtKB"/>
</dbReference>
<dbReference type="GO" id="GO:0003723">
    <property type="term" value="F:RNA binding"/>
    <property type="evidence" value="ECO:0000250"/>
    <property type="project" value="UniProtKB"/>
</dbReference>
<dbReference type="GO" id="GO:0051321">
    <property type="term" value="P:meiotic cell cycle"/>
    <property type="evidence" value="ECO:0007669"/>
    <property type="project" value="UniProtKB-KW"/>
</dbReference>
<dbReference type="GO" id="GO:0034587">
    <property type="term" value="P:piRNA processing"/>
    <property type="evidence" value="ECO:0000315"/>
    <property type="project" value="UniProtKB"/>
</dbReference>
<dbReference type="GO" id="GO:0031047">
    <property type="term" value="P:regulatory ncRNA-mediated gene silencing"/>
    <property type="evidence" value="ECO:0000315"/>
    <property type="project" value="UniProtKB"/>
</dbReference>
<dbReference type="CDD" id="cd06148">
    <property type="entry name" value="Egl_like_exo"/>
    <property type="match status" value="1"/>
</dbReference>
<dbReference type="FunFam" id="3.30.420.10:FF:000103">
    <property type="entry name" value="piRNA biogenesis protein EXD1"/>
    <property type="match status" value="1"/>
</dbReference>
<dbReference type="Gene3D" id="3.30.420.10">
    <property type="entry name" value="Ribonuclease H-like superfamily/Ribonuclease H"/>
    <property type="match status" value="1"/>
</dbReference>
<dbReference type="InterPro" id="IPR002562">
    <property type="entry name" value="3'-5'_exonuclease_dom"/>
</dbReference>
<dbReference type="InterPro" id="IPR052144">
    <property type="entry name" value="piRNA_biogenesis_EXD1"/>
</dbReference>
<dbReference type="InterPro" id="IPR012337">
    <property type="entry name" value="RNaseH-like_sf"/>
</dbReference>
<dbReference type="InterPro" id="IPR036397">
    <property type="entry name" value="RNaseH_sf"/>
</dbReference>
<dbReference type="PANTHER" id="PTHR46628">
    <property type="entry name" value="PIRNA BIOGENESIS PROTEIN EXD1"/>
    <property type="match status" value="1"/>
</dbReference>
<dbReference type="PANTHER" id="PTHR46628:SF1">
    <property type="entry name" value="PIRNA BIOGENESIS PROTEIN EXD1"/>
    <property type="match status" value="1"/>
</dbReference>
<dbReference type="Pfam" id="PF01612">
    <property type="entry name" value="DNA_pol_A_exo1"/>
    <property type="match status" value="1"/>
</dbReference>
<dbReference type="SMART" id="SM00474">
    <property type="entry name" value="35EXOc"/>
    <property type="match status" value="1"/>
</dbReference>
<dbReference type="SUPFAM" id="SSF53098">
    <property type="entry name" value="Ribonuclease H-like"/>
    <property type="match status" value="1"/>
</dbReference>
<sequence length="570" mass="63962">MDPSSDYHFLNQILWRRVKLTLVSGIFEGVLQHVDPNKIVVLKNVRNAESGRSVPGVKVFFGHEILNVELMDEAEGASGEKASAVSINTERAGMEKVKNEDVNVCEPASPAPEVPTSSLLSDLKYCPSEEEEVTYTVIDQFQQKFGAAMLHIKKQSVLSVAAEGANVCRHGKLCWLQVATNSRVYLFDIFLLGSRAFNNGLQMILEDKRILKVIHDCRWLSDCLSHQYGIMLNNVFDTQVADVLQFSMETGGFLPNCISTLQESLIRHLKVAPRYLFFLEERQKRIQENPEIWLTRPLPPSLLKILALETTYLLPLRLVLLDEVMSDLTTLVDGYLNTYREGSADRLAGTEPACMELPAELLQLQDFQKQRRERAVKEYRVNARGLLIRTPLHPKEPTACTAGKEERVQGFLFYKTDGGDQVPRFLCPKSHEDEKFLDKESKQTTAKSQIVPPRKEGEAHKDSKNKPGCWESAGPEDPRAQKAHALPPTWASQSQFSLKEEIEQLTVVGNKGALTSPKEGALVSPSLLQETWEAPTDTFHLPEKAEVSTLPPCPALEKTDSWISPSLNLF</sequence>
<comment type="function">
    <text evidence="1 4">RNA-binding component of the PET complex, a multiprotein complex required for the processing of piRNAs during spermatogenesis. The piRNA metabolic process mediates the repression of transposable elements during meiosis by forming complexes composed of piRNAs and Piwi proteins and governs the methylation and subsequent repression of transposable elements, preventing their mobilization, which is essential for the germline integrity (PubMed:26669262). The PET complex is required during the secondary piRNAs metabolic process for the PIWIL2 slicing-triggered loading of PIWIL4 piRNAs. In the PET complex, EXD1 probably acts as an RNA adapter. EXD1 is an inactive exonuclease (By similarity).</text>
</comment>
<comment type="subunit">
    <text evidence="1 4">Homodimer (By similarity). Component of the PET complex, at least composed of EXD1, PIWIL2, TDRD12 and piRNAs.</text>
</comment>
<comment type="subcellular location">
    <subcellularLocation>
        <location evidence="1">Cytoplasm</location>
    </subcellularLocation>
    <text evidence="1">Component of the meiotic nuage, also named P granule, a germ-cell-specific organelle required to repress transposon activity during meiosis.</text>
</comment>
<comment type="domain">
    <text evidence="7">The 3'-5' exonuclease domain lacks the conserved Asp-Glu-Asp-Asp (DEDD) residues that coordinates divalent ions essential for exonuclease activity.</text>
</comment>
<comment type="disruption phenotype">
    <text evidence="4">Mice are viable and display normal fertility but show defective biogenesis of antisense piRNAs and activation of transposons. Reduced sequences generated by Piwil2 slicing, impaired biogenesis of Piwil4 piRNAs and derepressed LINE1 retrotransposons.</text>
</comment>
<comment type="similarity">
    <text evidence="6">Belongs to the EXD1 family.</text>
</comment>